<keyword id="KW-0963">Cytoplasm</keyword>
<keyword id="KW-0479">Metal-binding</keyword>
<keyword id="KW-0539">Nucleus</keyword>
<keyword id="KW-0597">Phosphoprotein</keyword>
<keyword id="KW-1185">Reference proteome</keyword>
<keyword id="KW-0677">Repeat</keyword>
<keyword id="KW-0808">Transferase</keyword>
<keyword id="KW-0833">Ubl conjugation pathway</keyword>
<keyword id="KW-0862">Zinc</keyword>
<keyword id="KW-0863">Zinc-finger</keyword>
<protein>
    <recommendedName>
        <fullName>E3 ubiquitin-protein ligase hyd</fullName>
        <ecNumber evidence="10">2.3.2.26</ecNumber>
    </recommendedName>
    <alternativeName>
        <fullName>HECT-type E3 ubiquitin transferase hyd</fullName>
    </alternativeName>
    <alternativeName>
        <fullName>Protein hyperplastic discs</fullName>
    </alternativeName>
</protein>
<accession>P51592</accession>
<accession>Q9VH88</accession>
<organism>
    <name type="scientific">Drosophila melanogaster</name>
    <name type="common">Fruit fly</name>
    <dbReference type="NCBI Taxonomy" id="7227"/>
    <lineage>
        <taxon>Eukaryota</taxon>
        <taxon>Metazoa</taxon>
        <taxon>Ecdysozoa</taxon>
        <taxon>Arthropoda</taxon>
        <taxon>Hexapoda</taxon>
        <taxon>Insecta</taxon>
        <taxon>Pterygota</taxon>
        <taxon>Neoptera</taxon>
        <taxon>Endopterygota</taxon>
        <taxon>Diptera</taxon>
        <taxon>Brachycera</taxon>
        <taxon>Muscomorpha</taxon>
        <taxon>Ephydroidea</taxon>
        <taxon>Drosophilidae</taxon>
        <taxon>Drosophila</taxon>
        <taxon>Sophophora</taxon>
    </lineage>
</organism>
<sequence length="2885" mass="318881">MVSMQFVLQPLPGSDDQFIERIREVSDKVNRFGYGSHRIFEQLKIPVKEVVIGPAHIGVLLEDGKAFRVSFSINSEKLDLTKSDAKCSTSGGSGTASASKAPSSSRPMARSRARLLRATGRSNSTGQGSGSRSTGVIIGGSTSSRPLVTVPATYVPEELISQAEVVLQGKSRNLIIRELQRTNLDVNLAVNNLLSRDDEEAEDTEEGADNYVPEDLISLLDNGFSGDNNSVIIDPSDGLFSEEIFSNYSSIRNLLFDRIRSERSNANANAADSNQSTTRSTSSGTALTGNSGLSAQISVNADREAFSRWRDRQYYGPRRWISKDDYTWEKDADSKKKEPSPMLSPIWISEELQPWPEKSSVRFKTIGALYSEFIALSESGDLYQWRWSDAEPYKSETENVYHPKTVSLNIVERVELISANFIRCSVVTETNRVATWMDEQLGYIGAKLEHSCCAFNEFISDSITKIYVCSLYTVVKTESNNIYWWGVLPFDQRRFLWDKFRTKTKKPFKVVATDINVGAQVIMKKCPMYQSGSIGFTCSNGVPKVGQLLNSVWTFTDVCRMKIININTNSGVDKSQAAGNNLNAHGITPDKDLPKSTAMPSTGSSKNGQSFSNSKESTDRIDMPPPPSPASSTCSDTGSVTSHKRTKRATTKEDSNAPQEGRKDEELWEVKDVVFVEDKVGPVGKVLKVDGDFVAVRFPAINAAAVAAAAAATSSTSNTASTSKEEGKEDDWQQCRLLRREDVQIFRTAMSTRGPDWLQKQPKKINVGGDAAGAQILTLAVDSRGIHVIKKVLGKIHYSLYNLYNCKQEQNCLFPTDCNSFIGSTPGNILMACNDDCSGNSSTIVLRDGNGALYPLAKDCLGSIKDPQWFDLPPVKSITMSTISLPAMLSGVNLKSKVCMTALLFDTQKLMPHILRCDVKNSFAALGRLEREDQADTALVVEERCDGARNIFHACVIMCAPSSNKDSPPDSPSGGVEKKSLVGLSVARSIPTVSTSAYVSSIAFGASASSSNENSSFATMSSSAAGSASSTSRDNRTNLRDMMNRLINSDQAEQSGSQPMATNNEDHAYIPWPAETPAASNLSASSSQNVSDSIEDDISKIIPSSSQSSMLSNIKLGSPTYTFDLAQRREHALTILQQMCVSPALRPYLCHMLSTKDAQGQTPFMLSVSCRAYEAGIILLNTILMLSEQDPQLKEAMIFPNGSPADQSPLHVICYNDTCSFTWTGADHINQNIFECKTCGLTGSLCCCTECARVCHKGHDCKLKRTAPTAYCDCWEKCKCKALIAGNLTKRFALLCKLVSCTDLVTKFNSKGESILLFLIQTVGRQIVEQRQYRFSVRVRNVSTAATGATGNNSVISNRKTSAAEIDNDMPDHDLEPPKFARKALERLLIDWNAVRSMIMSGAERGDVPNPAGSASENSNSEGFNMFIQTQHGSTLLDKFTHSLIVKCTSDHLDTLLLTLVRELQNASVSNRSKEAEEVVRRFVRSVARVFVIFNLEKQPNPEKRKSHSSCNKYVQSCVKVFQTLHKISIEELCEVSEALIAPVRLGVVRPTAPFTMSSSNLDNSDDLFSVDPLAPSNVESPSEQILVHDAGNDQSANFNIQQNYDVVAMETIRDASESEEVINREANSHNQDDELIENQRNEDGMQDDESDNDFTFNDAETESDSDDNQSNQEVQRSVQAGATVGSENDIGVLFLEDESGDSSAQEEDGSEDGESDDQSDEFNFNEQQLERRSTNSNARSDLAPQTMQWAIRSRDTARSSVRVPTGSNMVFIDPMALRRSTVPASTTVTTPSIEPHTMATTASNLARAFGITIRQISELISILSYNVLNDIETSLKIQNDEAIAVQAFVEKRLKATWDWMFTVMDGTEAQLKFGAYLTNYTDPNHPLHPLNLSAQASSSQTPAPATSSSVNGVNIMGSNSRRDFFTYCLSLMRSHTSEHRDALPVLDITALRHIAYVLDAFVYYMRNDSGFYDKQDTISGRINNLSPMTESYDTDDELANLEEFNADVQMSASSMPSGSQGTRRHAFFARSESTLSLGCSAPEGFELPLDMAMPLADKPHLLQPNSKRQELFANLPLLVTTNANNSGATNDGDGGSIFDYTPTRLGFSNSLKRNERVYETVPIDSSKTGDGNVTNKAEGSTDSNIYVQLKKKQGSDDFKSHKEADGNQSKYEKVVLMETDDSLPSTSKSTEALMATRPEVIIAPNKASVSPATAARSVIVLAGGSCLKTIDSDINNYSASNLSTAEQAKCDTQYQKSTSDHLLLFPARGSQFYQSNFSELPSWNFLLSRWKLTLDLFGRVFMDDVGMEHGSVLPELRGFPVKEMRFRRHMEKLRNGQQRDLVLCKLERNRESLIVQTFKELNTQFGNQSRRIQPPITFNRVKVTFKDEPGEGSGVARSFYTSIAEALLASAKIPNLESVQVGTNHSKYVVPFSSILRSRTVSGSSRDQSTLQRRGSNSKILWRSARERKALNLDARPYTPPNSSDNATPESLNDHLSVHLQQIGERLYPKIHSINQTHAPKITGMLLEIPTPQLLSVISSDETLRQKVNEAIEIITFKQKSETSAQSSQPKKSPSVVVVDPVDDDNEPLFYSPGKRGFYTPRQGFASFERINAFRNIGRLIGLCLLQNELLPLFLQRHVLKYILGRKIKFHDLAFFDPALYESFRQIIQNAQTKEGEETINRMELCFVIDLMKEEGCGNRELIPGGRDVAVTSSNIFEYVRRYTEYRLIKSQEKALEALKDGVFDVLPDNSMINLTAEDLRLLLNGVGDINVSTLISYTTFNDESSEGPDKLLKFKKWFWSIVEKMNIMERQDLVYFWTGSPALPASEEGFQPLPSVTIRPADDSHLPTANTCISRLYIPLYSSKSILRSKMLMAIKSKNFGFV</sequence>
<comment type="function">
    <text evidence="6 9 10 11">E3 ubiquitin-protein ligase which accepts ubiquitin from an E2 ubiquitin-conjugating enzyme in the form of a thioester and then directly transfers the ubiquitin to targeted substrate (PubMed:28689657, PubMed:32339205). Required for regulation of cell proliferation in imaginal disks and germ cells (PubMed:12421709, PubMed:7958417). Acts as a negative regulator of hh, ci and dpp expression in the anterior of the eye disk (PubMed:12421709, PubMed:7958417). Acts as a positive regulator of the canonical Wnt signaling pathway by mediating ubiquitination and degradation of gro (PubMed:28689657). Catalyzes 'Lys-63'-linked polyubiquitination of akirin, thereby activating the immune deficiency pathway (Imd) (PubMed:32339205).</text>
</comment>
<comment type="catalytic activity">
    <reaction evidence="10">
        <text>S-ubiquitinyl-[E2 ubiquitin-conjugating enzyme]-L-cysteine + [acceptor protein]-L-lysine = [E2 ubiquitin-conjugating enzyme]-L-cysteine + N(6)-ubiquitinyl-[acceptor protein]-L-lysine.</text>
        <dbReference type="EC" id="2.3.2.26"/>
    </reaction>
</comment>
<comment type="pathway">
    <text evidence="9 10">Protein modification; protein ubiquitination.</text>
</comment>
<comment type="subcellular location">
    <subcellularLocation>
        <location evidence="11">Nucleus</location>
    </subcellularLocation>
    <subcellularLocation>
        <location evidence="11">Cytoplasm</location>
    </subcellularLocation>
</comment>
<comment type="developmental stage">
    <text evidence="11">Expressed at all stages of development, with high levels at the embryonic and pupal stages (at protein level).</text>
</comment>
<comment type="disruption phenotype">
    <text evidence="11">Ectopic expression of hh and dpp, resulting in non autonomous overgrowth of the disc and premature photoreceptor differentiation that propagates into the surrounding tissue.</text>
</comment>
<comment type="miscellaneous">
    <text>A cysteine residue is required for ubiquitin-thioester formation.</text>
</comment>
<comment type="similarity">
    <text evidence="12">Belongs to the UBR5 family.</text>
</comment>
<proteinExistence type="evidence at protein level"/>
<reference key="1">
    <citation type="journal article" date="1994" name="Dev. Biol.">
        <title>Genetic and molecular analysis of hyperplastic discs, a gene whose product is required for regulation of cell proliferation in Drosophila melanogaster imaginal discs and germ cells.</title>
        <authorList>
            <person name="Mansfield E."/>
            <person name="Hersperger E."/>
            <person name="Biggs J."/>
            <person name="Shearn A."/>
        </authorList>
    </citation>
    <scope>NUCLEOTIDE SEQUENCE [MRNA]</scope>
    <scope>FUNCTION</scope>
    <scope>SUBCELLULAR LOCATION</scope>
    <scope>DEVELOPMENTAL STAGE</scope>
    <scope>DISRUPTION PHENOTYPE</scope>
</reference>
<reference key="2">
    <citation type="submission" date="1997-12" db="EMBL/GenBank/DDBJ databases">
        <authorList>
            <person name="Shearn A."/>
        </authorList>
    </citation>
    <scope>SEQUENCE REVISION</scope>
</reference>
<reference key="3">
    <citation type="journal article" date="2000" name="Science">
        <title>The genome sequence of Drosophila melanogaster.</title>
        <authorList>
            <person name="Adams M.D."/>
            <person name="Celniker S.E."/>
            <person name="Holt R.A."/>
            <person name="Evans C.A."/>
            <person name="Gocayne J.D."/>
            <person name="Amanatides P.G."/>
            <person name="Scherer S.E."/>
            <person name="Li P.W."/>
            <person name="Hoskins R.A."/>
            <person name="Galle R.F."/>
            <person name="George R.A."/>
            <person name="Lewis S.E."/>
            <person name="Richards S."/>
            <person name="Ashburner M."/>
            <person name="Henderson S.N."/>
            <person name="Sutton G.G."/>
            <person name="Wortman J.R."/>
            <person name="Yandell M.D."/>
            <person name="Zhang Q."/>
            <person name="Chen L.X."/>
            <person name="Brandon R.C."/>
            <person name="Rogers Y.-H.C."/>
            <person name="Blazej R.G."/>
            <person name="Champe M."/>
            <person name="Pfeiffer B.D."/>
            <person name="Wan K.H."/>
            <person name="Doyle C."/>
            <person name="Baxter E.G."/>
            <person name="Helt G."/>
            <person name="Nelson C.R."/>
            <person name="Miklos G.L.G."/>
            <person name="Abril J.F."/>
            <person name="Agbayani A."/>
            <person name="An H.-J."/>
            <person name="Andrews-Pfannkoch C."/>
            <person name="Baldwin D."/>
            <person name="Ballew R.M."/>
            <person name="Basu A."/>
            <person name="Baxendale J."/>
            <person name="Bayraktaroglu L."/>
            <person name="Beasley E.M."/>
            <person name="Beeson K.Y."/>
            <person name="Benos P.V."/>
            <person name="Berman B.P."/>
            <person name="Bhandari D."/>
            <person name="Bolshakov S."/>
            <person name="Borkova D."/>
            <person name="Botchan M.R."/>
            <person name="Bouck J."/>
            <person name="Brokstein P."/>
            <person name="Brottier P."/>
            <person name="Burtis K.C."/>
            <person name="Busam D.A."/>
            <person name="Butler H."/>
            <person name="Cadieu E."/>
            <person name="Center A."/>
            <person name="Chandra I."/>
            <person name="Cherry J.M."/>
            <person name="Cawley S."/>
            <person name="Dahlke C."/>
            <person name="Davenport L.B."/>
            <person name="Davies P."/>
            <person name="de Pablos B."/>
            <person name="Delcher A."/>
            <person name="Deng Z."/>
            <person name="Mays A.D."/>
            <person name="Dew I."/>
            <person name="Dietz S.M."/>
            <person name="Dodson K."/>
            <person name="Doup L.E."/>
            <person name="Downes M."/>
            <person name="Dugan-Rocha S."/>
            <person name="Dunkov B.C."/>
            <person name="Dunn P."/>
            <person name="Durbin K.J."/>
            <person name="Evangelista C.C."/>
            <person name="Ferraz C."/>
            <person name="Ferriera S."/>
            <person name="Fleischmann W."/>
            <person name="Fosler C."/>
            <person name="Gabrielian A.E."/>
            <person name="Garg N.S."/>
            <person name="Gelbart W.M."/>
            <person name="Glasser K."/>
            <person name="Glodek A."/>
            <person name="Gong F."/>
            <person name="Gorrell J.H."/>
            <person name="Gu Z."/>
            <person name="Guan P."/>
            <person name="Harris M."/>
            <person name="Harris N.L."/>
            <person name="Harvey D.A."/>
            <person name="Heiman T.J."/>
            <person name="Hernandez J.R."/>
            <person name="Houck J."/>
            <person name="Hostin D."/>
            <person name="Houston K.A."/>
            <person name="Howland T.J."/>
            <person name="Wei M.-H."/>
            <person name="Ibegwam C."/>
            <person name="Jalali M."/>
            <person name="Kalush F."/>
            <person name="Karpen G.H."/>
            <person name="Ke Z."/>
            <person name="Kennison J.A."/>
            <person name="Ketchum K.A."/>
            <person name="Kimmel B.E."/>
            <person name="Kodira C.D."/>
            <person name="Kraft C.L."/>
            <person name="Kravitz S."/>
            <person name="Kulp D."/>
            <person name="Lai Z."/>
            <person name="Lasko P."/>
            <person name="Lei Y."/>
            <person name="Levitsky A.A."/>
            <person name="Li J.H."/>
            <person name="Li Z."/>
            <person name="Liang Y."/>
            <person name="Lin X."/>
            <person name="Liu X."/>
            <person name="Mattei B."/>
            <person name="McIntosh T.C."/>
            <person name="McLeod M.P."/>
            <person name="McPherson D."/>
            <person name="Merkulov G."/>
            <person name="Milshina N.V."/>
            <person name="Mobarry C."/>
            <person name="Morris J."/>
            <person name="Moshrefi A."/>
            <person name="Mount S.M."/>
            <person name="Moy M."/>
            <person name="Murphy B."/>
            <person name="Murphy L."/>
            <person name="Muzny D.M."/>
            <person name="Nelson D.L."/>
            <person name="Nelson D.R."/>
            <person name="Nelson K.A."/>
            <person name="Nixon K."/>
            <person name="Nusskern D.R."/>
            <person name="Pacleb J.M."/>
            <person name="Palazzolo M."/>
            <person name="Pittman G.S."/>
            <person name="Pan S."/>
            <person name="Pollard J."/>
            <person name="Puri V."/>
            <person name="Reese M.G."/>
            <person name="Reinert K."/>
            <person name="Remington K."/>
            <person name="Saunders R.D.C."/>
            <person name="Scheeler F."/>
            <person name="Shen H."/>
            <person name="Shue B.C."/>
            <person name="Siden-Kiamos I."/>
            <person name="Simpson M."/>
            <person name="Skupski M.P."/>
            <person name="Smith T.J."/>
            <person name="Spier E."/>
            <person name="Spradling A.C."/>
            <person name="Stapleton M."/>
            <person name="Strong R."/>
            <person name="Sun E."/>
            <person name="Svirskas R."/>
            <person name="Tector C."/>
            <person name="Turner R."/>
            <person name="Venter E."/>
            <person name="Wang A.H."/>
            <person name="Wang X."/>
            <person name="Wang Z.-Y."/>
            <person name="Wassarman D.A."/>
            <person name="Weinstock G.M."/>
            <person name="Weissenbach J."/>
            <person name="Williams S.M."/>
            <person name="Woodage T."/>
            <person name="Worley K.C."/>
            <person name="Wu D."/>
            <person name="Yang S."/>
            <person name="Yao Q.A."/>
            <person name="Ye J."/>
            <person name="Yeh R.-F."/>
            <person name="Zaveri J.S."/>
            <person name="Zhan M."/>
            <person name="Zhang G."/>
            <person name="Zhao Q."/>
            <person name="Zheng L."/>
            <person name="Zheng X.H."/>
            <person name="Zhong F.N."/>
            <person name="Zhong W."/>
            <person name="Zhou X."/>
            <person name="Zhu S.C."/>
            <person name="Zhu X."/>
            <person name="Smith H.O."/>
            <person name="Gibbs R.A."/>
            <person name="Myers E.W."/>
            <person name="Rubin G.M."/>
            <person name="Venter J.C."/>
        </authorList>
    </citation>
    <scope>NUCLEOTIDE SEQUENCE [LARGE SCALE GENOMIC DNA]</scope>
    <source>
        <strain>Berkeley</strain>
    </source>
</reference>
<reference key="4">
    <citation type="journal article" date="2002" name="Genome Biol.">
        <title>Annotation of the Drosophila melanogaster euchromatic genome: a systematic review.</title>
        <authorList>
            <person name="Misra S."/>
            <person name="Crosby M.A."/>
            <person name="Mungall C.J."/>
            <person name="Matthews B.B."/>
            <person name="Campbell K.S."/>
            <person name="Hradecky P."/>
            <person name="Huang Y."/>
            <person name="Kaminker J.S."/>
            <person name="Millburn G.H."/>
            <person name="Prochnik S.E."/>
            <person name="Smith C.D."/>
            <person name="Tupy J.L."/>
            <person name="Whitfield E.J."/>
            <person name="Bayraktaroglu L."/>
            <person name="Berman B.P."/>
            <person name="Bettencourt B.R."/>
            <person name="Celniker S.E."/>
            <person name="de Grey A.D.N.J."/>
            <person name="Drysdale R.A."/>
            <person name="Harris N.L."/>
            <person name="Richter J."/>
            <person name="Russo S."/>
            <person name="Schroeder A.J."/>
            <person name="Shu S.Q."/>
            <person name="Stapleton M."/>
            <person name="Yamada C."/>
            <person name="Ashburner M."/>
            <person name="Gelbart W.M."/>
            <person name="Rubin G.M."/>
            <person name="Lewis S.E."/>
        </authorList>
    </citation>
    <scope>GENOME REANNOTATION</scope>
    <source>
        <strain>Berkeley</strain>
    </source>
</reference>
<reference key="5">
    <citation type="journal article" date="2002" name="Development">
        <title>The ubiquitin ligase Hyperplastic discs negatively regulates hedgehog and decapentaplegic expression by independent mechanisms.</title>
        <authorList>
            <person name="Lee J.D."/>
            <person name="Amanai K."/>
            <person name="Shearn A."/>
            <person name="Treisman J.E."/>
        </authorList>
    </citation>
    <scope>FUNCTION</scope>
</reference>
<reference key="6">
    <citation type="journal article" date="2007" name="Mol. Biosyst.">
        <title>An integrated chemical, mass spectrometric and computational strategy for (quantitative) phosphoproteomics: application to Drosophila melanogaster Kc167 cells.</title>
        <authorList>
            <person name="Bodenmiller B."/>
            <person name="Mueller L.N."/>
            <person name="Pedrioli P.G.A."/>
            <person name="Pflieger D."/>
            <person name="Juenger M.A."/>
            <person name="Eng J.K."/>
            <person name="Aebersold R."/>
            <person name="Tao W.A."/>
        </authorList>
    </citation>
    <scope>PHOSPHORYLATION [LARGE SCALE ANALYSIS] AT SER-2183</scope>
    <scope>IDENTIFICATION BY MASS SPECTROMETRY</scope>
</reference>
<reference key="7">
    <citation type="journal article" date="2008" name="J. Proteome Res.">
        <title>Phosphoproteome analysis of Drosophila melanogaster embryos.</title>
        <authorList>
            <person name="Zhai B."/>
            <person name="Villen J."/>
            <person name="Beausoleil S.A."/>
            <person name="Mintseris J."/>
            <person name="Gygi S.P."/>
        </authorList>
    </citation>
    <scope>PHOSPHORYLATION [LARGE SCALE ANALYSIS] AT SER-628; SER-631; SER-967; SER-1362; SER-2037 AND SER-2574</scope>
    <scope>IDENTIFICATION BY MASS SPECTROMETRY</scope>
    <source>
        <tissue>Embryo</tissue>
    </source>
</reference>
<reference key="8">
    <citation type="journal article" date="2017" name="Mol. Cell">
        <title>Wnt-dependent inactivation of the Groucho/TLE co-repressor by the HECT E3 ubiquitin ligase Hyd/UBR5.</title>
        <authorList>
            <person name="Flack J.E."/>
            <person name="Mieszczanek J."/>
            <person name="Novcic N."/>
            <person name="Bienz M."/>
        </authorList>
    </citation>
    <scope>FUNCTION</scope>
    <scope>PATHWAY</scope>
</reference>
<reference key="9">
    <citation type="journal article" date="2020" name="PLoS Pathog.">
        <title>Hyd ubiquitinates the NF-kappaB co-factor Akirin to operate an effective immune response in Drosophila.</title>
        <authorList>
            <person name="Cammarata-Mouchtouris A."/>
            <person name="Nguyen X.H."/>
            <person name="Acker A."/>
            <person name="Bonnay F."/>
            <person name="Goto A."/>
            <person name="Orian A."/>
            <person name="Fauvarque M.O."/>
            <person name="Boutros M."/>
            <person name="Reichhart J.M."/>
            <person name="Matt N."/>
        </authorList>
    </citation>
    <scope>FUNCTION</scope>
    <scope>CATALYTIC ACTIVITY</scope>
    <scope>PATHWAY</scope>
</reference>
<name>HYD_DROME</name>
<feature type="chain" id="PRO_0000084107" description="E3 ubiquitin-protein ligase hyd">
    <location>
        <begin position="1"/>
        <end position="2885"/>
    </location>
</feature>
<feature type="domain" description="UBA" evidence="2">
    <location>
        <begin position="154"/>
        <end position="196"/>
    </location>
</feature>
<feature type="domain" description="PABC" evidence="4">
    <location>
        <begin position="2484"/>
        <end position="2561"/>
    </location>
</feature>
<feature type="domain" description="HECT" evidence="1">
    <location>
        <begin position="2782"/>
        <end position="2885"/>
    </location>
</feature>
<feature type="zinc finger region" description="UBR-type" evidence="3">
    <location>
        <begin position="1217"/>
        <end position="1285"/>
    </location>
</feature>
<feature type="region of interest" description="Disordered" evidence="5">
    <location>
        <begin position="83"/>
        <end position="138"/>
    </location>
</feature>
<feature type="region of interest" description="Disordered" evidence="5">
    <location>
        <begin position="266"/>
        <end position="291"/>
    </location>
</feature>
<feature type="region of interest" description="Disordered" evidence="5">
    <location>
        <begin position="580"/>
        <end position="664"/>
    </location>
</feature>
<feature type="region of interest" description="Disordered" evidence="5">
    <location>
        <begin position="711"/>
        <end position="731"/>
    </location>
</feature>
<feature type="region of interest" description="Disordered" evidence="5">
    <location>
        <begin position="1008"/>
        <end position="1035"/>
    </location>
</feature>
<feature type="region of interest" description="Disordered" evidence="5">
    <location>
        <begin position="1642"/>
        <end position="1761"/>
    </location>
</feature>
<feature type="region of interest" description="Disordered" evidence="5">
    <location>
        <begin position="2124"/>
        <end position="2143"/>
    </location>
</feature>
<feature type="region of interest" description="Disordered" evidence="5">
    <location>
        <begin position="2473"/>
        <end position="2492"/>
    </location>
</feature>
<feature type="compositionally biased region" description="Low complexity" evidence="5">
    <location>
        <begin position="95"/>
        <end position="108"/>
    </location>
</feature>
<feature type="compositionally biased region" description="Low complexity" evidence="5">
    <location>
        <begin position="116"/>
        <end position="138"/>
    </location>
</feature>
<feature type="compositionally biased region" description="Low complexity" evidence="5">
    <location>
        <begin position="266"/>
        <end position="276"/>
    </location>
</feature>
<feature type="compositionally biased region" description="Polar residues" evidence="5">
    <location>
        <begin position="277"/>
        <end position="291"/>
    </location>
</feature>
<feature type="compositionally biased region" description="Polar residues" evidence="5">
    <location>
        <begin position="598"/>
        <end position="615"/>
    </location>
</feature>
<feature type="compositionally biased region" description="Basic and acidic residues" evidence="5">
    <location>
        <begin position="650"/>
        <end position="664"/>
    </location>
</feature>
<feature type="compositionally biased region" description="Low complexity" evidence="5">
    <location>
        <begin position="711"/>
        <end position="722"/>
    </location>
</feature>
<feature type="compositionally biased region" description="Low complexity" evidence="5">
    <location>
        <begin position="1008"/>
        <end position="1032"/>
    </location>
</feature>
<feature type="compositionally biased region" description="Polar residues" evidence="5">
    <location>
        <begin position="1669"/>
        <end position="1681"/>
    </location>
</feature>
<feature type="compositionally biased region" description="Acidic residues" evidence="5">
    <location>
        <begin position="1696"/>
        <end position="1721"/>
    </location>
</feature>
<feature type="compositionally biased region" description="Polar residues" evidence="5">
    <location>
        <begin position="1735"/>
        <end position="1749"/>
    </location>
</feature>
<feature type="compositionally biased region" description="Polar residues" evidence="5">
    <location>
        <begin position="2482"/>
        <end position="2492"/>
    </location>
</feature>
<feature type="active site" description="Glycyl thioester intermediate" evidence="1">
    <location>
        <position position="2854"/>
    </location>
</feature>
<feature type="modified residue" description="Phosphoserine" evidence="8">
    <location>
        <position position="628"/>
    </location>
</feature>
<feature type="modified residue" description="Phosphoserine" evidence="8">
    <location>
        <position position="631"/>
    </location>
</feature>
<feature type="modified residue" description="Phosphoserine" evidence="8">
    <location>
        <position position="967"/>
    </location>
</feature>
<feature type="modified residue" description="Phosphoserine" evidence="8">
    <location>
        <position position="1362"/>
    </location>
</feature>
<feature type="modified residue" description="Phosphoserine" evidence="8">
    <location>
        <position position="2037"/>
    </location>
</feature>
<feature type="modified residue" description="Phosphoserine" evidence="7">
    <location>
        <position position="2183"/>
    </location>
</feature>
<feature type="modified residue" description="Phosphoserine" evidence="8">
    <location>
        <position position="2574"/>
    </location>
</feature>
<feature type="sequence conflict" description="In Ref. 1; AAB88625." evidence="12" ref="1">
    <original>T</original>
    <variation>A</variation>
    <location>
        <position position="125"/>
    </location>
</feature>
<feature type="sequence conflict" description="In Ref. 1; AAB88625." evidence="12" ref="1">
    <original>T</original>
    <variation>A</variation>
    <location>
        <position position="277"/>
    </location>
</feature>
<feature type="sequence conflict" description="In Ref. 1; AAB88625." evidence="12" ref="1">
    <original>S</original>
    <variation>P</variation>
    <location>
        <position position="294"/>
    </location>
</feature>
<feature type="sequence conflict" description="In Ref. 1; AAB88625." evidence="12" ref="1">
    <original>S</original>
    <variation>A</variation>
    <location>
        <position position="377"/>
    </location>
</feature>
<feature type="sequence conflict" description="In Ref. 1; AAB88625." evidence="12" ref="1">
    <original>Y</original>
    <variation>C</variation>
    <location>
        <position position="383"/>
    </location>
</feature>
<feature type="sequence conflict" description="In Ref. 1; AAB88625." evidence="12" ref="1">
    <original>R</original>
    <variation>G</variation>
    <location>
        <position position="386"/>
    </location>
</feature>
<feature type="sequence conflict" description="In Ref. 1; AAB88625." evidence="12" ref="1">
    <original>T</original>
    <variation>A</variation>
    <location>
        <position position="397"/>
    </location>
</feature>
<feature type="sequence conflict" description="In Ref. 1; AAB88625." evidence="12" ref="1">
    <original>S</original>
    <variation>C</variation>
    <location>
        <position position="407"/>
    </location>
</feature>
<feature type="sequence conflict" description="In Ref. 1; AAB88625." evidence="12" ref="1">
    <original>A</original>
    <variation>G</variation>
    <location>
        <position position="657"/>
    </location>
</feature>
<feature type="sequence conflict" description="In Ref. 1; AAB88625." evidence="12" ref="1">
    <original>EDVQIFRTAMSTRGPDWLQ</original>
    <variation>KMSDISHCYVTRLLA</variation>
    <location>
        <begin position="741"/>
        <end position="759"/>
    </location>
</feature>
<feature type="sequence conflict" description="In Ref. 1; AAB88625." evidence="12" ref="1">
    <original>V</original>
    <variation>A</variation>
    <location>
        <position position="1490"/>
    </location>
</feature>
<feature type="sequence conflict" description="In Ref. 1; AAB88625." evidence="12" ref="1">
    <original>E</original>
    <variation>Q</variation>
    <location>
        <position position="1497"/>
    </location>
</feature>
<feature type="sequence conflict" description="In Ref. 1; AAB88625." evidence="12" ref="1">
    <original>EKR</original>
    <variation>QKQ</variation>
    <location>
        <begin position="1503"/>
        <end position="1505"/>
    </location>
</feature>
<feature type="sequence conflict" description="In Ref. 1; AAB88625." evidence="12" ref="1">
    <original>MSS</original>
    <variation>CHR</variation>
    <location>
        <begin position="1557"/>
        <end position="1559"/>
    </location>
</feature>
<feature type="sequence conflict" description="In Ref. 1; AAB88625." evidence="12" ref="1">
    <original>R</original>
    <variation>G</variation>
    <location>
        <position position="1625"/>
    </location>
</feature>
<feature type="sequence conflict" description="In Ref. 1; AAB88625." evidence="12" ref="1">
    <original>R</original>
    <variation>G</variation>
    <location>
        <position position="1641"/>
    </location>
</feature>
<feature type="sequence conflict" description="In Ref. 1; AAB88625." evidence="12" ref="1">
    <original>P</original>
    <variation>R</variation>
    <location>
        <position position="1784"/>
    </location>
</feature>
<feature type="sequence conflict" description="In Ref. 1; AAB88625." evidence="12" ref="1">
    <original>T</original>
    <variation>S</variation>
    <location>
        <position position="1978"/>
    </location>
</feature>
<feature type="sequence conflict" description="In Ref. 1; AAB88625." evidence="12" ref="1">
    <original>S</original>
    <variation>T</variation>
    <location>
        <position position="2037"/>
    </location>
</feature>
<feature type="sequence conflict" description="In Ref. 1; AAB88625." evidence="12" ref="1">
    <original>G</original>
    <variation>A</variation>
    <location>
        <position position="2096"/>
    </location>
</feature>
<feature type="sequence conflict" description="In Ref. 1; AAB88625." evidence="12" ref="1">
    <original>G</original>
    <variation>GELRVYAVNNLQTLNFQSTR</variation>
    <location>
        <position position="2167"/>
    </location>
</feature>
<feature type="sequence conflict" description="In Ref. 1; AAB88625." evidence="12" ref="1">
    <original>SASNLSTAEQAKCDTQYQKSTSDHLLLFPARGSQ</original>
    <variation>RLQIYRPQNKPNVIHNIKSQHQTTCYYFLLVVLS</variation>
    <location>
        <begin position="2239"/>
        <end position="2272"/>
    </location>
</feature>
<feature type="sequence conflict" description="In Ref. 1; AAB88625." evidence="12" ref="1">
    <original>ELPSW</original>
    <variation>GIAPC</variation>
    <location>
        <begin position="2280"/>
        <end position="2284"/>
    </location>
</feature>
<feature type="sequence conflict" description="In Ref. 1; AAB88625." evidence="12" ref="1">
    <original>RW</original>
    <variation>A</variation>
    <location>
        <begin position="2290"/>
        <end position="2291"/>
    </location>
</feature>
<feature type="sequence conflict" description="In Ref. 1; AAB88625." evidence="12" ref="1">
    <original>V</original>
    <variation>P</variation>
    <location>
        <position position="2301"/>
    </location>
</feature>
<feature type="sequence conflict" description="In Ref. 1; AAB88625." evidence="12" ref="1">
    <original>SR</original>
    <variation>T</variation>
    <location>
        <begin position="2439"/>
        <end position="2440"/>
    </location>
</feature>
<feature type="sequence conflict" description="In Ref. 1; AAB88625." evidence="12" ref="1">
    <original>T</original>
    <variation>I</variation>
    <location>
        <position position="2601"/>
    </location>
</feature>
<feature type="sequence conflict" description="In Ref. 1; AAB88625." evidence="12" ref="1">
    <original>G</original>
    <variation>R</variation>
    <location>
        <position position="2646"/>
    </location>
</feature>
<feature type="sequence conflict" description="In Ref. 1; AAB88625." evidence="12" ref="1">
    <original>AVTSSNIFEYVRRYTEYR</original>
    <variation>VSHRVIYSSTSDAIQNID</variation>
    <location>
        <begin position="2711"/>
        <end position="2728"/>
    </location>
</feature>
<feature type="sequence conflict" description="In Ref. 1; AAB88625." evidence="12" ref="1">
    <original>D</original>
    <variation>H</variation>
    <location>
        <position position="2814"/>
    </location>
</feature>
<evidence type="ECO:0000255" key="1">
    <source>
        <dbReference type="PROSITE-ProRule" id="PRU00104"/>
    </source>
</evidence>
<evidence type="ECO:0000255" key="2">
    <source>
        <dbReference type="PROSITE-ProRule" id="PRU00212"/>
    </source>
</evidence>
<evidence type="ECO:0000255" key="3">
    <source>
        <dbReference type="PROSITE-ProRule" id="PRU00508"/>
    </source>
</evidence>
<evidence type="ECO:0000255" key="4">
    <source>
        <dbReference type="PROSITE-ProRule" id="PRU00641"/>
    </source>
</evidence>
<evidence type="ECO:0000256" key="5">
    <source>
        <dbReference type="SAM" id="MobiDB-lite"/>
    </source>
</evidence>
<evidence type="ECO:0000269" key="6">
    <source>
    </source>
</evidence>
<evidence type="ECO:0000269" key="7">
    <source>
    </source>
</evidence>
<evidence type="ECO:0000269" key="8">
    <source>
    </source>
</evidence>
<evidence type="ECO:0000269" key="9">
    <source>
    </source>
</evidence>
<evidence type="ECO:0000269" key="10">
    <source>
    </source>
</evidence>
<evidence type="ECO:0000269" key="11">
    <source>
    </source>
</evidence>
<evidence type="ECO:0000305" key="12"/>
<dbReference type="EC" id="2.3.2.26" evidence="10"/>
<dbReference type="EMBL" id="L14644">
    <property type="protein sequence ID" value="AAB88625.1"/>
    <property type="molecule type" value="mRNA"/>
</dbReference>
<dbReference type="EMBL" id="AE014297">
    <property type="protein sequence ID" value="AAF54431.2"/>
    <property type="molecule type" value="Genomic_DNA"/>
</dbReference>
<dbReference type="PIR" id="T08437">
    <property type="entry name" value="T08437"/>
</dbReference>
<dbReference type="RefSeq" id="NP_524296.2">
    <property type="nucleotide sequence ID" value="NM_079572.4"/>
</dbReference>
<dbReference type="SMR" id="P51592"/>
<dbReference type="BioGRID" id="66340">
    <property type="interactions" value="16"/>
</dbReference>
<dbReference type="FunCoup" id="P51592">
    <property type="interactions" value="2948"/>
</dbReference>
<dbReference type="IntAct" id="P51592">
    <property type="interactions" value="14"/>
</dbReference>
<dbReference type="STRING" id="7227.FBpp0308671"/>
<dbReference type="GlyGen" id="P51592">
    <property type="glycosylation" value="2 sites"/>
</dbReference>
<dbReference type="iPTMnet" id="P51592"/>
<dbReference type="PaxDb" id="7227-FBpp0081568"/>
<dbReference type="EnsemblMetazoa" id="FBtr0082090">
    <property type="protein sequence ID" value="FBpp0081568"/>
    <property type="gene ID" value="FBgn0002431"/>
</dbReference>
<dbReference type="GeneID" id="41181"/>
<dbReference type="KEGG" id="dme:Dmel_CG9484"/>
<dbReference type="AGR" id="FB:FBgn0002431"/>
<dbReference type="CTD" id="41181"/>
<dbReference type="FlyBase" id="FBgn0002431">
    <property type="gene designation" value="hyd"/>
</dbReference>
<dbReference type="VEuPathDB" id="VectorBase:FBgn0002431"/>
<dbReference type="eggNOG" id="KOG0943">
    <property type="taxonomic scope" value="Eukaryota"/>
</dbReference>
<dbReference type="GeneTree" id="ENSGT00940000156357"/>
<dbReference type="HOGENOM" id="CLU_000257_0_0_1"/>
<dbReference type="InParanoid" id="P51592"/>
<dbReference type="OrthoDB" id="298098at2759"/>
<dbReference type="PhylomeDB" id="P51592"/>
<dbReference type="SignaLink" id="P51592"/>
<dbReference type="UniPathway" id="UPA00143"/>
<dbReference type="BioGRID-ORCS" id="41181">
    <property type="hits" value="1 hit in 1 CRISPR screen"/>
</dbReference>
<dbReference type="ChiTaRS" id="hyd">
    <property type="organism name" value="fly"/>
</dbReference>
<dbReference type="GenomeRNAi" id="41181"/>
<dbReference type="PRO" id="PR:P51592"/>
<dbReference type="Proteomes" id="UP000000803">
    <property type="component" value="Chromosome 3R"/>
</dbReference>
<dbReference type="Bgee" id="FBgn0002431">
    <property type="expression patterns" value="Expressed in egg cell and 169 other cell types or tissues"/>
</dbReference>
<dbReference type="ExpressionAtlas" id="P51592">
    <property type="expression patterns" value="baseline and differential"/>
</dbReference>
<dbReference type="GO" id="GO:0005737">
    <property type="term" value="C:cytoplasm"/>
    <property type="evidence" value="ECO:0000314"/>
    <property type="project" value="FlyBase"/>
</dbReference>
<dbReference type="GO" id="GO:0005634">
    <property type="term" value="C:nucleus"/>
    <property type="evidence" value="ECO:0000314"/>
    <property type="project" value="FlyBase"/>
</dbReference>
<dbReference type="GO" id="GO:0003723">
    <property type="term" value="F:RNA binding"/>
    <property type="evidence" value="ECO:0007669"/>
    <property type="project" value="InterPro"/>
</dbReference>
<dbReference type="GO" id="GO:0043130">
    <property type="term" value="F:ubiquitin binding"/>
    <property type="evidence" value="ECO:0007669"/>
    <property type="project" value="InterPro"/>
</dbReference>
<dbReference type="GO" id="GO:0061630">
    <property type="term" value="F:ubiquitin protein ligase activity"/>
    <property type="evidence" value="ECO:0000314"/>
    <property type="project" value="UniProtKB"/>
</dbReference>
<dbReference type="GO" id="GO:0034450">
    <property type="term" value="F:ubiquitin-ubiquitin ligase activity"/>
    <property type="evidence" value="ECO:0000250"/>
    <property type="project" value="FlyBase"/>
</dbReference>
<dbReference type="GO" id="GO:0008270">
    <property type="term" value="F:zinc ion binding"/>
    <property type="evidence" value="ECO:0007669"/>
    <property type="project" value="UniProtKB-KW"/>
</dbReference>
<dbReference type="GO" id="GO:0007455">
    <property type="term" value="P:eye-antennal disc morphogenesis"/>
    <property type="evidence" value="ECO:0000315"/>
    <property type="project" value="FlyBase"/>
</dbReference>
<dbReference type="GO" id="GO:0008585">
    <property type="term" value="P:female gonad development"/>
    <property type="evidence" value="ECO:0000315"/>
    <property type="project" value="FlyBase"/>
</dbReference>
<dbReference type="GO" id="GO:0007444">
    <property type="term" value="P:imaginal disc development"/>
    <property type="evidence" value="ECO:0000315"/>
    <property type="project" value="FlyBase"/>
</dbReference>
<dbReference type="GO" id="GO:0007446">
    <property type="term" value="P:imaginal disc growth"/>
    <property type="evidence" value="ECO:0000315"/>
    <property type="project" value="FlyBase"/>
</dbReference>
<dbReference type="GO" id="GO:0007112">
    <property type="term" value="P:male meiosis cytokinesis"/>
    <property type="evidence" value="ECO:0000315"/>
    <property type="project" value="FlyBase"/>
</dbReference>
<dbReference type="GO" id="GO:0090263">
    <property type="term" value="P:positive regulation of canonical Wnt signaling pathway"/>
    <property type="evidence" value="ECO:0000315"/>
    <property type="project" value="FlyBase"/>
</dbReference>
<dbReference type="GO" id="GO:0061059">
    <property type="term" value="P:positive regulation of peptidoglycan recognition protein signaling pathway"/>
    <property type="evidence" value="ECO:0000315"/>
    <property type="project" value="UniProtKB"/>
</dbReference>
<dbReference type="GO" id="GO:0070936">
    <property type="term" value="P:protein K48-linked ubiquitination"/>
    <property type="evidence" value="ECO:0000250"/>
    <property type="project" value="FlyBase"/>
</dbReference>
<dbReference type="GO" id="GO:0070534">
    <property type="term" value="P:protein K63-linked ubiquitination"/>
    <property type="evidence" value="ECO:0000314"/>
    <property type="project" value="UniProtKB"/>
</dbReference>
<dbReference type="GO" id="GO:0000209">
    <property type="term" value="P:protein polyubiquitination"/>
    <property type="evidence" value="ECO:0000250"/>
    <property type="project" value="FlyBase"/>
</dbReference>
<dbReference type="GO" id="GO:0007289">
    <property type="term" value="P:spermatid nucleus differentiation"/>
    <property type="evidence" value="ECO:0000315"/>
    <property type="project" value="FlyBase"/>
</dbReference>
<dbReference type="GO" id="GO:0007283">
    <property type="term" value="P:spermatogenesis"/>
    <property type="evidence" value="ECO:0000315"/>
    <property type="project" value="FlyBase"/>
</dbReference>
<dbReference type="GO" id="GO:0035220">
    <property type="term" value="P:wing disc development"/>
    <property type="evidence" value="ECO:0000315"/>
    <property type="project" value="FlyBase"/>
</dbReference>
<dbReference type="CDD" id="cd14423">
    <property type="entry name" value="CUE_UBR5"/>
    <property type="match status" value="1"/>
</dbReference>
<dbReference type="CDD" id="cd00078">
    <property type="entry name" value="HECTc"/>
    <property type="match status" value="1"/>
</dbReference>
<dbReference type="CDD" id="cd19675">
    <property type="entry name" value="UBR-box_UBR5"/>
    <property type="match status" value="1"/>
</dbReference>
<dbReference type="FunFam" id="3.30.2160.10:FF:000006">
    <property type="entry name" value="E3 ubiquitin-protein ligase UBR5 isoform X2"/>
    <property type="match status" value="1"/>
</dbReference>
<dbReference type="FunFam" id="1.10.8.10:FF:000009">
    <property type="entry name" value="Putative E3 ubiquitin-protein ligase UBR5"/>
    <property type="match status" value="1"/>
</dbReference>
<dbReference type="FunFam" id="3.30.2410.10:FF:000008">
    <property type="entry name" value="Putative E3 ubiquitin-protein ligase UBR5"/>
    <property type="match status" value="1"/>
</dbReference>
<dbReference type="Gene3D" id="1.10.1900.10">
    <property type="entry name" value="c-terminal domain of poly(a) binding protein"/>
    <property type="match status" value="1"/>
</dbReference>
<dbReference type="Gene3D" id="1.10.8.10">
    <property type="entry name" value="DNA helicase RuvA subunit, C-terminal domain"/>
    <property type="match status" value="1"/>
</dbReference>
<dbReference type="Gene3D" id="3.30.2160.10">
    <property type="entry name" value="Hect, E3 ligase catalytic domain"/>
    <property type="match status" value="1"/>
</dbReference>
<dbReference type="Gene3D" id="3.30.2410.10">
    <property type="entry name" value="Hect, E3 ligase catalytic domain"/>
    <property type="match status" value="1"/>
</dbReference>
<dbReference type="Gene3D" id="3.90.1750.10">
    <property type="entry name" value="Hect, E3 ligase catalytic domains"/>
    <property type="match status" value="2"/>
</dbReference>
<dbReference type="Gene3D" id="2.130.10.30">
    <property type="entry name" value="Regulator of chromosome condensation 1/beta-lactamase-inhibitor protein II"/>
    <property type="match status" value="1"/>
</dbReference>
<dbReference type="InterPro" id="IPR000569">
    <property type="entry name" value="HECT_dom"/>
</dbReference>
<dbReference type="InterPro" id="IPR035983">
    <property type="entry name" value="Hect_E3_ubiquitin_ligase"/>
</dbReference>
<dbReference type="InterPro" id="IPR036053">
    <property type="entry name" value="PABP-dom"/>
</dbReference>
<dbReference type="InterPro" id="IPR002004">
    <property type="entry name" value="PABP_HYD_C"/>
</dbReference>
<dbReference type="InterPro" id="IPR009091">
    <property type="entry name" value="RCC1/BLIP-II"/>
</dbReference>
<dbReference type="InterPro" id="IPR015940">
    <property type="entry name" value="UBA"/>
</dbReference>
<dbReference type="InterPro" id="IPR047503">
    <property type="entry name" value="UBR-box_UBR5"/>
</dbReference>
<dbReference type="InterPro" id="IPR024725">
    <property type="entry name" value="UBR5_UBA"/>
</dbReference>
<dbReference type="InterPro" id="IPR003126">
    <property type="entry name" value="Znf_UBR"/>
</dbReference>
<dbReference type="PANTHER" id="PTHR46276">
    <property type="entry name" value="E3 UBIQUITIN-PROTEIN LIGASE UBR5"/>
    <property type="match status" value="1"/>
</dbReference>
<dbReference type="PANTHER" id="PTHR46276:SF1">
    <property type="entry name" value="E3 UBIQUITIN-PROTEIN LIGASE UBR5"/>
    <property type="match status" value="1"/>
</dbReference>
<dbReference type="Pfam" id="PF11547">
    <property type="entry name" value="E3_UbLigase_EDD"/>
    <property type="match status" value="1"/>
</dbReference>
<dbReference type="Pfam" id="PF00632">
    <property type="entry name" value="HECT"/>
    <property type="match status" value="1"/>
</dbReference>
<dbReference type="Pfam" id="PF00658">
    <property type="entry name" value="MLLE"/>
    <property type="match status" value="1"/>
</dbReference>
<dbReference type="SMART" id="SM00119">
    <property type="entry name" value="HECTc"/>
    <property type="match status" value="1"/>
</dbReference>
<dbReference type="SMART" id="SM00517">
    <property type="entry name" value="PolyA"/>
    <property type="match status" value="1"/>
</dbReference>
<dbReference type="SMART" id="SM00396">
    <property type="entry name" value="ZnF_UBR1"/>
    <property type="match status" value="1"/>
</dbReference>
<dbReference type="SUPFAM" id="SSF56204">
    <property type="entry name" value="Hect, E3 ligase catalytic domain"/>
    <property type="match status" value="1"/>
</dbReference>
<dbReference type="SUPFAM" id="SSF63570">
    <property type="entry name" value="PABC (PABP) domain"/>
    <property type="match status" value="1"/>
</dbReference>
<dbReference type="SUPFAM" id="SSF50985">
    <property type="entry name" value="RCC1/BLIP-II"/>
    <property type="match status" value="1"/>
</dbReference>
<dbReference type="PROSITE" id="PS50237">
    <property type="entry name" value="HECT"/>
    <property type="match status" value="1"/>
</dbReference>
<dbReference type="PROSITE" id="PS51309">
    <property type="entry name" value="PABC"/>
    <property type="match status" value="1"/>
</dbReference>
<dbReference type="PROSITE" id="PS50030">
    <property type="entry name" value="UBA"/>
    <property type="match status" value="1"/>
</dbReference>
<dbReference type="PROSITE" id="PS51157">
    <property type="entry name" value="ZF_UBR"/>
    <property type="match status" value="1"/>
</dbReference>
<gene>
    <name type="primary">hyd</name>
    <name type="synonym">l(3)C43</name>
    <name type="ORF">CG9484</name>
</gene>